<comment type="function">
    <text evidence="1">Quinone reductase that provides resistance to thiol-specific stress caused by electrophilic quinones.</text>
</comment>
<comment type="function">
    <text evidence="1">Also exhibits azoreductase activity. Catalyzes the reductive cleavage of the azo bond in aromatic azo compounds to the corresponding amines.</text>
</comment>
<comment type="catalytic activity">
    <reaction evidence="1">
        <text>2 a quinone + NADH + H(+) = 2 a 1,4-benzosemiquinone + NAD(+)</text>
        <dbReference type="Rhea" id="RHEA:65952"/>
        <dbReference type="ChEBI" id="CHEBI:15378"/>
        <dbReference type="ChEBI" id="CHEBI:57540"/>
        <dbReference type="ChEBI" id="CHEBI:57945"/>
        <dbReference type="ChEBI" id="CHEBI:132124"/>
        <dbReference type="ChEBI" id="CHEBI:134225"/>
    </reaction>
</comment>
<comment type="catalytic activity">
    <reaction evidence="1">
        <text>N,N-dimethyl-1,4-phenylenediamine + anthranilate + 2 NAD(+) = 2-(4-dimethylaminophenyl)diazenylbenzoate + 2 NADH + 2 H(+)</text>
        <dbReference type="Rhea" id="RHEA:55872"/>
        <dbReference type="ChEBI" id="CHEBI:15378"/>
        <dbReference type="ChEBI" id="CHEBI:15783"/>
        <dbReference type="ChEBI" id="CHEBI:16567"/>
        <dbReference type="ChEBI" id="CHEBI:57540"/>
        <dbReference type="ChEBI" id="CHEBI:57945"/>
        <dbReference type="ChEBI" id="CHEBI:71579"/>
        <dbReference type="EC" id="1.7.1.17"/>
    </reaction>
</comment>
<comment type="cofactor">
    <cofactor evidence="1">
        <name>FMN</name>
        <dbReference type="ChEBI" id="CHEBI:58210"/>
    </cofactor>
    <text evidence="1">Binds 1 FMN per subunit.</text>
</comment>
<comment type="subunit">
    <text evidence="1">Homodimer.</text>
</comment>
<comment type="similarity">
    <text evidence="1">Belongs to the azoreductase type 1 family.</text>
</comment>
<accession>C3MAW0</accession>
<organism>
    <name type="scientific">Sinorhizobium fredii (strain NBRC 101917 / NGR234)</name>
    <dbReference type="NCBI Taxonomy" id="394"/>
    <lineage>
        <taxon>Bacteria</taxon>
        <taxon>Pseudomonadati</taxon>
        <taxon>Pseudomonadota</taxon>
        <taxon>Alphaproteobacteria</taxon>
        <taxon>Hyphomicrobiales</taxon>
        <taxon>Rhizobiaceae</taxon>
        <taxon>Sinorhizobium/Ensifer group</taxon>
        <taxon>Sinorhizobium</taxon>
    </lineage>
</organism>
<reference key="1">
    <citation type="journal article" date="2009" name="Appl. Environ. Microbiol.">
        <title>Rhizobium sp. strain NGR234 possesses a remarkable number of secretion systems.</title>
        <authorList>
            <person name="Schmeisser C."/>
            <person name="Liesegang H."/>
            <person name="Krysciak D."/>
            <person name="Bakkou N."/>
            <person name="Le Quere A."/>
            <person name="Wollherr A."/>
            <person name="Heinemeyer I."/>
            <person name="Morgenstern B."/>
            <person name="Pommerening-Roeser A."/>
            <person name="Flores M."/>
            <person name="Palacios R."/>
            <person name="Brenner S."/>
            <person name="Gottschalk G."/>
            <person name="Schmitz R.A."/>
            <person name="Broughton W.J."/>
            <person name="Perret X."/>
            <person name="Strittmatter A.W."/>
            <person name="Streit W.R."/>
        </authorList>
    </citation>
    <scope>NUCLEOTIDE SEQUENCE [LARGE SCALE GENOMIC DNA]</scope>
    <source>
        <strain>NBRC 101917 / NGR234</strain>
    </source>
</reference>
<sequence length="206" mass="22109">MNVLHIDSGILGEHSVSRRLTAAIVAQIKADRPDANVIYRDLVSERLQHLTGAQIMAPADLDGVDPALASDVRTGRQMLDEFLAADTIVVGAPMYNFSIPSQLKAWIDRLAVAGKTFRYTEAGPEGLAKGKKVIVASTRGGHYSAGPAAAMDHQEAYLRTVFGFFGITDVEFVRAEGLNLGADQKQFAIAEAEKTIAEGDVLRLAS</sequence>
<dbReference type="EC" id="1.6.5.-" evidence="1"/>
<dbReference type="EC" id="1.7.1.17" evidence="1"/>
<dbReference type="EMBL" id="CP001389">
    <property type="protein sequence ID" value="ACP24953.1"/>
    <property type="molecule type" value="Genomic_DNA"/>
</dbReference>
<dbReference type="RefSeq" id="WP_012707736.1">
    <property type="nucleotide sequence ID" value="NC_012587.1"/>
</dbReference>
<dbReference type="RefSeq" id="YP_002825706.1">
    <property type="nucleotide sequence ID" value="NC_012587.1"/>
</dbReference>
<dbReference type="SMR" id="C3MAW0"/>
<dbReference type="STRING" id="394.NGR_c11680"/>
<dbReference type="KEGG" id="rhi:NGR_c11680"/>
<dbReference type="PATRIC" id="fig|394.7.peg.3987"/>
<dbReference type="eggNOG" id="COG1182">
    <property type="taxonomic scope" value="Bacteria"/>
</dbReference>
<dbReference type="HOGENOM" id="CLU_088964_0_0_5"/>
<dbReference type="OrthoDB" id="9787136at2"/>
<dbReference type="Proteomes" id="UP000001054">
    <property type="component" value="Chromosome"/>
</dbReference>
<dbReference type="GO" id="GO:0009055">
    <property type="term" value="F:electron transfer activity"/>
    <property type="evidence" value="ECO:0007669"/>
    <property type="project" value="UniProtKB-UniRule"/>
</dbReference>
<dbReference type="GO" id="GO:0010181">
    <property type="term" value="F:FMN binding"/>
    <property type="evidence" value="ECO:0007669"/>
    <property type="project" value="UniProtKB-UniRule"/>
</dbReference>
<dbReference type="GO" id="GO:0016652">
    <property type="term" value="F:oxidoreductase activity, acting on NAD(P)H as acceptor"/>
    <property type="evidence" value="ECO:0007669"/>
    <property type="project" value="UniProtKB-UniRule"/>
</dbReference>
<dbReference type="GO" id="GO:0016655">
    <property type="term" value="F:oxidoreductase activity, acting on NAD(P)H, quinone or similar compound as acceptor"/>
    <property type="evidence" value="ECO:0007669"/>
    <property type="project" value="InterPro"/>
</dbReference>
<dbReference type="Gene3D" id="3.40.50.360">
    <property type="match status" value="1"/>
</dbReference>
<dbReference type="HAMAP" id="MF_01216">
    <property type="entry name" value="Azoreductase_type1"/>
    <property type="match status" value="1"/>
</dbReference>
<dbReference type="InterPro" id="IPR003680">
    <property type="entry name" value="Flavodoxin_fold"/>
</dbReference>
<dbReference type="InterPro" id="IPR029039">
    <property type="entry name" value="Flavoprotein-like_sf"/>
</dbReference>
<dbReference type="InterPro" id="IPR050104">
    <property type="entry name" value="FMN-dep_NADH:Q_OxRdtase_AzoR1"/>
</dbReference>
<dbReference type="InterPro" id="IPR023048">
    <property type="entry name" value="NADH:quinone_OxRdtase_FMN_depd"/>
</dbReference>
<dbReference type="PANTHER" id="PTHR43741">
    <property type="entry name" value="FMN-DEPENDENT NADH-AZOREDUCTASE 1"/>
    <property type="match status" value="1"/>
</dbReference>
<dbReference type="PANTHER" id="PTHR43741:SF4">
    <property type="entry name" value="FMN-DEPENDENT NADH:QUINONE OXIDOREDUCTASE"/>
    <property type="match status" value="1"/>
</dbReference>
<dbReference type="Pfam" id="PF02525">
    <property type="entry name" value="Flavodoxin_2"/>
    <property type="match status" value="1"/>
</dbReference>
<dbReference type="SUPFAM" id="SSF52218">
    <property type="entry name" value="Flavoproteins"/>
    <property type="match status" value="1"/>
</dbReference>
<proteinExistence type="inferred from homology"/>
<feature type="chain" id="PRO_1000164763" description="FMN-dependent NADH:quinone oxidoreductase">
    <location>
        <begin position="1"/>
        <end position="206"/>
    </location>
</feature>
<feature type="binding site" evidence="1">
    <location>
        <begin position="15"/>
        <end position="17"/>
    </location>
    <ligand>
        <name>FMN</name>
        <dbReference type="ChEBI" id="CHEBI:58210"/>
    </ligand>
</feature>
<feature type="binding site" evidence="1">
    <location>
        <begin position="94"/>
        <end position="97"/>
    </location>
    <ligand>
        <name>FMN</name>
        <dbReference type="ChEBI" id="CHEBI:58210"/>
    </ligand>
</feature>
<feature type="binding site" evidence="1">
    <location>
        <begin position="138"/>
        <end position="141"/>
    </location>
    <ligand>
        <name>FMN</name>
        <dbReference type="ChEBI" id="CHEBI:58210"/>
    </ligand>
</feature>
<protein>
    <recommendedName>
        <fullName evidence="1">FMN-dependent NADH:quinone oxidoreductase</fullName>
        <ecNumber evidence="1">1.6.5.-</ecNumber>
    </recommendedName>
    <alternativeName>
        <fullName evidence="1">Azo-dye reductase</fullName>
    </alternativeName>
    <alternativeName>
        <fullName evidence="1">FMN-dependent NADH-azo compound oxidoreductase</fullName>
    </alternativeName>
    <alternativeName>
        <fullName evidence="1">FMN-dependent NADH-azoreductase</fullName>
        <ecNumber evidence="1">1.7.1.17</ecNumber>
    </alternativeName>
</protein>
<gene>
    <name evidence="1" type="primary">azoR</name>
    <name type="ordered locus">NGR_c11680</name>
</gene>
<evidence type="ECO:0000255" key="1">
    <source>
        <dbReference type="HAMAP-Rule" id="MF_01216"/>
    </source>
</evidence>
<keyword id="KW-0285">Flavoprotein</keyword>
<keyword id="KW-0288">FMN</keyword>
<keyword id="KW-0520">NAD</keyword>
<keyword id="KW-0560">Oxidoreductase</keyword>
<keyword id="KW-1185">Reference proteome</keyword>
<name>AZOR_SINFN</name>